<dbReference type="EMBL" id="U69645">
    <property type="protein sequence ID" value="AAB09561.1"/>
    <property type="molecule type" value="mRNA"/>
</dbReference>
<dbReference type="EMBL" id="AL645634">
    <property type="status" value="NOT_ANNOTATED_CDS"/>
    <property type="molecule type" value="Genomic_DNA"/>
</dbReference>
<dbReference type="EMBL" id="BC022842">
    <property type="protein sequence ID" value="AAH22842.1"/>
    <property type="molecule type" value="mRNA"/>
</dbReference>
<dbReference type="EMBL" id="X52361">
    <property type="protein sequence ID" value="CAA36587.1"/>
    <property type="molecule type" value="mRNA"/>
</dbReference>
<dbReference type="CCDS" id="CCDS7206.1"/>
<dbReference type="PIR" id="I37971">
    <property type="entry name" value="I37971"/>
</dbReference>
<dbReference type="RefSeq" id="NP_001005368.1">
    <property type="nucleotide sequence ID" value="NM_001005368.3"/>
</dbReference>
<dbReference type="RefSeq" id="NP_001311094.1">
    <property type="nucleotide sequence ID" value="NM_001324165.1"/>
</dbReference>
<dbReference type="RefSeq" id="NP_001311097.1">
    <property type="nucleotide sequence ID" value="NM_001324168.1"/>
</dbReference>
<dbReference type="RefSeq" id="NP_008904.1">
    <property type="nucleotide sequence ID" value="NM_006973.3"/>
</dbReference>
<dbReference type="RefSeq" id="XP_016872105.1">
    <property type="nucleotide sequence ID" value="XM_017016616.1"/>
</dbReference>
<dbReference type="PDB" id="2EPC">
    <property type="method" value="NMR"/>
    <property type="chains" value="A=241-269"/>
</dbReference>
<dbReference type="PDB" id="2EPT">
    <property type="method" value="NMR"/>
    <property type="chains" value="A=74-101"/>
</dbReference>
<dbReference type="PDB" id="2EPU">
    <property type="method" value="NMR"/>
    <property type="chains" value="A=100-131"/>
</dbReference>
<dbReference type="PDB" id="2YTA">
    <property type="method" value="NMR"/>
    <property type="chains" value="A=130-157"/>
</dbReference>
<dbReference type="PDB" id="2YTB">
    <property type="method" value="NMR"/>
    <property type="chains" value="A=185-213"/>
</dbReference>
<dbReference type="PDBsum" id="2EPC"/>
<dbReference type="PDBsum" id="2EPT"/>
<dbReference type="PDBsum" id="2EPU"/>
<dbReference type="PDBsum" id="2YTA"/>
<dbReference type="PDBsum" id="2YTB"/>
<dbReference type="SMR" id="P17041"/>
<dbReference type="BioGRID" id="113409">
    <property type="interactions" value="27"/>
</dbReference>
<dbReference type="FunCoup" id="P17041">
    <property type="interactions" value="13"/>
</dbReference>
<dbReference type="IntAct" id="P17041">
    <property type="interactions" value="15"/>
</dbReference>
<dbReference type="STRING" id="9606.ENSP00000379143"/>
<dbReference type="iPTMnet" id="P17041"/>
<dbReference type="PhosphoSitePlus" id="P17041"/>
<dbReference type="BioMuta" id="ZNF32"/>
<dbReference type="DMDM" id="85681868"/>
<dbReference type="jPOST" id="P17041"/>
<dbReference type="MassIVE" id="P17041"/>
<dbReference type="PaxDb" id="9606-ENSP00000379143"/>
<dbReference type="PeptideAtlas" id="P17041"/>
<dbReference type="ProteomicsDB" id="53449"/>
<dbReference type="Pumba" id="P17041"/>
<dbReference type="Antibodypedia" id="26938">
    <property type="antibodies" value="55 antibodies from 12 providers"/>
</dbReference>
<dbReference type="DNASU" id="7580"/>
<dbReference type="Ensembl" id="ENST00000374433.7">
    <property type="protein sequence ID" value="ENSP00000363556.2"/>
    <property type="gene ID" value="ENSG00000169740.14"/>
</dbReference>
<dbReference type="Ensembl" id="ENST00000395797.1">
    <property type="protein sequence ID" value="ENSP00000379143.1"/>
    <property type="gene ID" value="ENSG00000169740.14"/>
</dbReference>
<dbReference type="GeneID" id="7580"/>
<dbReference type="KEGG" id="hsa:7580"/>
<dbReference type="MANE-Select" id="ENST00000374433.7">
    <property type="protein sequence ID" value="ENSP00000363556.2"/>
    <property type="RefSeq nucleotide sequence ID" value="NM_006973.3"/>
    <property type="RefSeq protein sequence ID" value="NP_008904.1"/>
</dbReference>
<dbReference type="UCSC" id="uc001jbb.4">
    <property type="organism name" value="human"/>
</dbReference>
<dbReference type="AGR" id="HGNC:13095"/>
<dbReference type="CTD" id="7580"/>
<dbReference type="DisGeNET" id="7580"/>
<dbReference type="GeneCards" id="ZNF32"/>
<dbReference type="HGNC" id="HGNC:13095">
    <property type="gene designation" value="ZNF32"/>
</dbReference>
<dbReference type="HPA" id="ENSG00000169740">
    <property type="expression patterns" value="Low tissue specificity"/>
</dbReference>
<dbReference type="MIM" id="194539">
    <property type="type" value="gene"/>
</dbReference>
<dbReference type="neXtProt" id="NX_P17041"/>
<dbReference type="OpenTargets" id="ENSG00000169740"/>
<dbReference type="PharmGKB" id="PA37670"/>
<dbReference type="VEuPathDB" id="HostDB:ENSG00000169740"/>
<dbReference type="eggNOG" id="KOG1721">
    <property type="taxonomic scope" value="Eukaryota"/>
</dbReference>
<dbReference type="GeneTree" id="ENSGT00940000153582"/>
<dbReference type="HOGENOM" id="CLU_002678_18_0_1"/>
<dbReference type="InParanoid" id="P17041"/>
<dbReference type="OMA" id="WDFQNAF"/>
<dbReference type="OrthoDB" id="654211at2759"/>
<dbReference type="PAN-GO" id="P17041">
    <property type="GO annotations" value="3 GO annotations based on evolutionary models"/>
</dbReference>
<dbReference type="PhylomeDB" id="P17041"/>
<dbReference type="TreeFam" id="TF337055"/>
<dbReference type="PathwayCommons" id="P17041"/>
<dbReference type="SignaLink" id="P17041"/>
<dbReference type="BioGRID-ORCS" id="7580">
    <property type="hits" value="12 hits in 1182 CRISPR screens"/>
</dbReference>
<dbReference type="ChiTaRS" id="ZNF32">
    <property type="organism name" value="human"/>
</dbReference>
<dbReference type="EvolutionaryTrace" id="P17041"/>
<dbReference type="GenomeRNAi" id="7580"/>
<dbReference type="Pharos" id="P17041">
    <property type="development level" value="Tdark"/>
</dbReference>
<dbReference type="PRO" id="PR:P17041"/>
<dbReference type="Proteomes" id="UP000005640">
    <property type="component" value="Chromosome 10"/>
</dbReference>
<dbReference type="RNAct" id="P17041">
    <property type="molecule type" value="protein"/>
</dbReference>
<dbReference type="Bgee" id="ENSG00000169740">
    <property type="expression patterns" value="Expressed in skeletal muscle tissue of rectus abdominis and 203 other cell types or tissues"/>
</dbReference>
<dbReference type="ExpressionAtlas" id="P17041">
    <property type="expression patterns" value="baseline and differential"/>
</dbReference>
<dbReference type="GO" id="GO:0005634">
    <property type="term" value="C:nucleus"/>
    <property type="evidence" value="ECO:0000250"/>
    <property type="project" value="UniProtKB"/>
</dbReference>
<dbReference type="GO" id="GO:0000981">
    <property type="term" value="F:DNA-binding transcription factor activity, RNA polymerase II-specific"/>
    <property type="evidence" value="ECO:0000318"/>
    <property type="project" value="GO_Central"/>
</dbReference>
<dbReference type="GO" id="GO:0000978">
    <property type="term" value="F:RNA polymerase II cis-regulatory region sequence-specific DNA binding"/>
    <property type="evidence" value="ECO:0000318"/>
    <property type="project" value="GO_Central"/>
</dbReference>
<dbReference type="GO" id="GO:1990837">
    <property type="term" value="F:sequence-specific double-stranded DNA binding"/>
    <property type="evidence" value="ECO:0000314"/>
    <property type="project" value="ARUK-UCL"/>
</dbReference>
<dbReference type="GO" id="GO:0008270">
    <property type="term" value="F:zinc ion binding"/>
    <property type="evidence" value="ECO:0007669"/>
    <property type="project" value="UniProtKB-KW"/>
</dbReference>
<dbReference type="GO" id="GO:0006357">
    <property type="term" value="P:regulation of transcription by RNA polymerase II"/>
    <property type="evidence" value="ECO:0000318"/>
    <property type="project" value="GO_Central"/>
</dbReference>
<dbReference type="FunFam" id="3.30.160.60:FF:000475">
    <property type="entry name" value="zinc finger protein 32 isoform X1"/>
    <property type="match status" value="2"/>
</dbReference>
<dbReference type="FunFam" id="3.30.160.60:FF:000505">
    <property type="entry name" value="zinc finger protein 32 isoform X1"/>
    <property type="match status" value="1"/>
</dbReference>
<dbReference type="FunFam" id="3.30.160.60:FF:001002">
    <property type="entry name" value="zinc finger protein 32 isoform X1"/>
    <property type="match status" value="1"/>
</dbReference>
<dbReference type="FunFam" id="3.30.160.60:FF:002343">
    <property type="entry name" value="Zinc finger protein 33A"/>
    <property type="match status" value="1"/>
</dbReference>
<dbReference type="FunFam" id="3.30.160.60:FF:001498">
    <property type="entry name" value="Zinc finger protein 404"/>
    <property type="match status" value="2"/>
</dbReference>
<dbReference type="Gene3D" id="3.30.160.60">
    <property type="entry name" value="Classic Zinc Finger"/>
    <property type="match status" value="7"/>
</dbReference>
<dbReference type="InterPro" id="IPR036236">
    <property type="entry name" value="Znf_C2H2_sf"/>
</dbReference>
<dbReference type="InterPro" id="IPR013087">
    <property type="entry name" value="Znf_C2H2_type"/>
</dbReference>
<dbReference type="PANTHER" id="PTHR24390">
    <property type="entry name" value="ZINC FINGER PROTEIN"/>
    <property type="match status" value="1"/>
</dbReference>
<dbReference type="PANTHER" id="PTHR24390:SF242">
    <property type="entry name" value="ZINC FINGER PROTEIN 76"/>
    <property type="match status" value="1"/>
</dbReference>
<dbReference type="Pfam" id="PF00096">
    <property type="entry name" value="zf-C2H2"/>
    <property type="match status" value="4"/>
</dbReference>
<dbReference type="Pfam" id="PF13465">
    <property type="entry name" value="zf-H2C2_2"/>
    <property type="match status" value="1"/>
</dbReference>
<dbReference type="SMART" id="SM00355">
    <property type="entry name" value="ZnF_C2H2"/>
    <property type="match status" value="7"/>
</dbReference>
<dbReference type="SUPFAM" id="SSF57667">
    <property type="entry name" value="beta-beta-alpha zinc fingers"/>
    <property type="match status" value="4"/>
</dbReference>
<dbReference type="PROSITE" id="PS00028">
    <property type="entry name" value="ZINC_FINGER_C2H2_1"/>
    <property type="match status" value="6"/>
</dbReference>
<dbReference type="PROSITE" id="PS50157">
    <property type="entry name" value="ZINC_FINGER_C2H2_2"/>
    <property type="match status" value="7"/>
</dbReference>
<proteinExistence type="evidence at protein level"/>
<sequence length="273" mass="31029">MFGFPTATLLDCHGRYAQNVAFFNVMTEAHHKYDHSEATGSSSWDIQNSFRREKLEQKSPDSKTLQEDSPGVRQRVYECQECGKSFRQKGSLTLHERIHTGQKPFECTHCGKSFRAKGNLVTHQRIHTGEKPYQCKECGKSFSQRGSLAVHERLHTGQKPYECAICQRSFRNQSNLAVHRRVHSGEKPYRCDQCGKAFSQKGSLIVHIRVHTGLKPYACTQCRKSFHTRGNCILHGKIHTGETPYLCGQCGKSFTQRGSLAVHQRSCSQRLTL</sequence>
<evidence type="ECO:0000255" key="1">
    <source>
        <dbReference type="PROSITE-ProRule" id="PRU00042"/>
    </source>
</evidence>
<evidence type="ECO:0000305" key="2"/>
<evidence type="ECO:0007744" key="3">
    <source>
        <dbReference type="PDB" id="2EPC"/>
    </source>
</evidence>
<evidence type="ECO:0007744" key="4">
    <source>
        <dbReference type="PDB" id="2EPT"/>
    </source>
</evidence>
<evidence type="ECO:0007744" key="5">
    <source>
        <dbReference type="PDB" id="2EPU"/>
    </source>
</evidence>
<evidence type="ECO:0007744" key="6">
    <source>
        <dbReference type="PDB" id="2YTA"/>
    </source>
</evidence>
<evidence type="ECO:0007744" key="7">
    <source>
        <dbReference type="PDB" id="2YTB"/>
    </source>
</evidence>
<evidence type="ECO:0007829" key="8">
    <source>
        <dbReference type="PDB" id="2EPC"/>
    </source>
</evidence>
<evidence type="ECO:0007829" key="9">
    <source>
        <dbReference type="PDB" id="2EPT"/>
    </source>
</evidence>
<evidence type="ECO:0007829" key="10">
    <source>
        <dbReference type="PDB" id="2EPU"/>
    </source>
</evidence>
<evidence type="ECO:0007829" key="11">
    <source>
        <dbReference type="PDB" id="2YTA"/>
    </source>
</evidence>
<evidence type="ECO:0007829" key="12">
    <source>
        <dbReference type="PDB" id="2YTB"/>
    </source>
</evidence>
<organism>
    <name type="scientific">Homo sapiens</name>
    <name type="common">Human</name>
    <dbReference type="NCBI Taxonomy" id="9606"/>
    <lineage>
        <taxon>Eukaryota</taxon>
        <taxon>Metazoa</taxon>
        <taxon>Chordata</taxon>
        <taxon>Craniata</taxon>
        <taxon>Vertebrata</taxon>
        <taxon>Euteleostomi</taxon>
        <taxon>Mammalia</taxon>
        <taxon>Eutheria</taxon>
        <taxon>Euarchontoglires</taxon>
        <taxon>Primates</taxon>
        <taxon>Haplorrhini</taxon>
        <taxon>Catarrhini</taxon>
        <taxon>Hominidae</taxon>
        <taxon>Homo</taxon>
    </lineage>
</organism>
<keyword id="KW-0002">3D-structure</keyword>
<keyword id="KW-0238">DNA-binding</keyword>
<keyword id="KW-0479">Metal-binding</keyword>
<keyword id="KW-0539">Nucleus</keyword>
<keyword id="KW-1267">Proteomics identification</keyword>
<keyword id="KW-1185">Reference proteome</keyword>
<keyword id="KW-0677">Repeat</keyword>
<keyword id="KW-0804">Transcription</keyword>
<keyword id="KW-0805">Transcription regulation</keyword>
<keyword id="KW-0862">Zinc</keyword>
<keyword id="KW-0863">Zinc-finger</keyword>
<gene>
    <name type="primary">ZNF32</name>
    <name type="synonym">KOX30</name>
</gene>
<reference key="1">
    <citation type="journal article" date="1997" name="J. Neurovirol.">
        <title>C2H2-546: a zinc finger protein differentially expressed in HTLV-1 infected T cells.</title>
        <authorList>
            <person name="Drew P.D."/>
            <person name="Gado A.M."/>
            <person name="Canning R.D."/>
            <person name="Nagle J.W."/>
            <person name="Dehejia A.M."/>
            <person name="Polymeropoulos M.H."/>
            <person name="Biddison W.E."/>
            <person name="Jacobson S."/>
            <person name="Becker K.G."/>
        </authorList>
    </citation>
    <scope>NUCLEOTIDE SEQUENCE [MRNA]</scope>
</reference>
<reference key="2">
    <citation type="journal article" date="2004" name="Nature">
        <title>The DNA sequence and comparative analysis of human chromosome 10.</title>
        <authorList>
            <person name="Deloukas P."/>
            <person name="Earthrowl M.E."/>
            <person name="Grafham D.V."/>
            <person name="Rubenfield M."/>
            <person name="French L."/>
            <person name="Steward C.A."/>
            <person name="Sims S.K."/>
            <person name="Jones M.C."/>
            <person name="Searle S."/>
            <person name="Scott C."/>
            <person name="Howe K."/>
            <person name="Hunt S.E."/>
            <person name="Andrews T.D."/>
            <person name="Gilbert J.G.R."/>
            <person name="Swarbreck D."/>
            <person name="Ashurst J.L."/>
            <person name="Taylor A."/>
            <person name="Battles J."/>
            <person name="Bird C.P."/>
            <person name="Ainscough R."/>
            <person name="Almeida J.P."/>
            <person name="Ashwell R.I.S."/>
            <person name="Ambrose K.D."/>
            <person name="Babbage A.K."/>
            <person name="Bagguley C.L."/>
            <person name="Bailey J."/>
            <person name="Banerjee R."/>
            <person name="Bates K."/>
            <person name="Beasley H."/>
            <person name="Bray-Allen S."/>
            <person name="Brown A.J."/>
            <person name="Brown J.Y."/>
            <person name="Burford D.C."/>
            <person name="Burrill W."/>
            <person name="Burton J."/>
            <person name="Cahill P."/>
            <person name="Camire D."/>
            <person name="Carter N.P."/>
            <person name="Chapman J.C."/>
            <person name="Clark S.Y."/>
            <person name="Clarke G."/>
            <person name="Clee C.M."/>
            <person name="Clegg S."/>
            <person name="Corby N."/>
            <person name="Coulson A."/>
            <person name="Dhami P."/>
            <person name="Dutta I."/>
            <person name="Dunn M."/>
            <person name="Faulkner L."/>
            <person name="Frankish A."/>
            <person name="Frankland J.A."/>
            <person name="Garner P."/>
            <person name="Garnett J."/>
            <person name="Gribble S."/>
            <person name="Griffiths C."/>
            <person name="Grocock R."/>
            <person name="Gustafson E."/>
            <person name="Hammond S."/>
            <person name="Harley J.L."/>
            <person name="Hart E."/>
            <person name="Heath P.D."/>
            <person name="Ho T.P."/>
            <person name="Hopkins B."/>
            <person name="Horne J."/>
            <person name="Howden P.J."/>
            <person name="Huckle E."/>
            <person name="Hynds C."/>
            <person name="Johnson C."/>
            <person name="Johnson D."/>
            <person name="Kana A."/>
            <person name="Kay M."/>
            <person name="Kimberley A.M."/>
            <person name="Kershaw J.K."/>
            <person name="Kokkinaki M."/>
            <person name="Laird G.K."/>
            <person name="Lawlor S."/>
            <person name="Lee H.M."/>
            <person name="Leongamornlert D.A."/>
            <person name="Laird G."/>
            <person name="Lloyd C."/>
            <person name="Lloyd D.M."/>
            <person name="Loveland J."/>
            <person name="Lovell J."/>
            <person name="McLaren S."/>
            <person name="McLay K.E."/>
            <person name="McMurray A."/>
            <person name="Mashreghi-Mohammadi M."/>
            <person name="Matthews L."/>
            <person name="Milne S."/>
            <person name="Nickerson T."/>
            <person name="Nguyen M."/>
            <person name="Overton-Larty E."/>
            <person name="Palmer S.A."/>
            <person name="Pearce A.V."/>
            <person name="Peck A.I."/>
            <person name="Pelan S."/>
            <person name="Phillimore B."/>
            <person name="Porter K."/>
            <person name="Rice C.M."/>
            <person name="Rogosin A."/>
            <person name="Ross M.T."/>
            <person name="Sarafidou T."/>
            <person name="Sehra H.K."/>
            <person name="Shownkeen R."/>
            <person name="Skuce C.D."/>
            <person name="Smith M."/>
            <person name="Standring L."/>
            <person name="Sycamore N."/>
            <person name="Tester J."/>
            <person name="Thorpe A."/>
            <person name="Torcasso W."/>
            <person name="Tracey A."/>
            <person name="Tromans A."/>
            <person name="Tsolas J."/>
            <person name="Wall M."/>
            <person name="Walsh J."/>
            <person name="Wang H."/>
            <person name="Weinstock K."/>
            <person name="West A.P."/>
            <person name="Willey D.L."/>
            <person name="Whitehead S.L."/>
            <person name="Wilming L."/>
            <person name="Wray P.W."/>
            <person name="Young L."/>
            <person name="Chen Y."/>
            <person name="Lovering R.C."/>
            <person name="Moschonas N.K."/>
            <person name="Siebert R."/>
            <person name="Fechtel K."/>
            <person name="Bentley D."/>
            <person name="Durbin R.M."/>
            <person name="Hubbard T."/>
            <person name="Doucette-Stamm L."/>
            <person name="Beck S."/>
            <person name="Smith D.R."/>
            <person name="Rogers J."/>
        </authorList>
    </citation>
    <scope>NUCLEOTIDE SEQUENCE [LARGE SCALE GENOMIC DNA]</scope>
</reference>
<reference key="3">
    <citation type="journal article" date="2004" name="Genome Res.">
        <title>The status, quality, and expansion of the NIH full-length cDNA project: the Mammalian Gene Collection (MGC).</title>
        <authorList>
            <consortium name="The MGC Project Team"/>
        </authorList>
    </citation>
    <scope>NUCLEOTIDE SEQUENCE [LARGE SCALE MRNA]</scope>
    <source>
        <tissue>Brain</tissue>
    </source>
</reference>
<reference key="4">
    <citation type="journal article" date="1990" name="New Biol.">
        <title>Multiple genes encoding zinc finger domains are expressed in human T cells.</title>
        <authorList>
            <person name="Thiesen H.-J."/>
        </authorList>
    </citation>
    <scope>NUCLEOTIDE SEQUENCE [MRNA] OF 77-128</scope>
    <source>
        <tissue>Lymphoid tissue</tissue>
    </source>
</reference>
<reference evidence="3 4 5 6 7" key="5">
    <citation type="submission" date="2007-03" db="PDB data bank">
        <title>Solution structure of zinc finger domains in zinc finger protein 32.</title>
        <authorList>
            <consortium name="RIKEN structural genomics initiative (RSGI)"/>
        </authorList>
    </citation>
    <scope>STRUCTURE BY NMR OF 74-157; 185-213 AND 241-269 IN COMPLEX WITH ZN(2+)</scope>
    <scope>ZINC FINGERS</scope>
</reference>
<accession>P17041</accession>
<accession>Q92951</accession>
<feature type="chain" id="PRO_0000047361" description="Zinc finger protein 32">
    <location>
        <begin position="1"/>
        <end position="273"/>
    </location>
</feature>
<feature type="zinc finger region" description="C2H2-type 1" evidence="1 4">
    <location>
        <begin position="77"/>
        <end position="99"/>
    </location>
</feature>
<feature type="zinc finger region" description="C2H2-type 2" evidence="1 5">
    <location>
        <begin position="105"/>
        <end position="127"/>
    </location>
</feature>
<feature type="zinc finger region" description="C2H2-type 3" evidence="1 6">
    <location>
        <begin position="133"/>
        <end position="155"/>
    </location>
</feature>
<feature type="zinc finger region" description="C2H2-type 4" evidence="1">
    <location>
        <begin position="161"/>
        <end position="183"/>
    </location>
</feature>
<feature type="zinc finger region" description="C2H2-type 5" evidence="1 7">
    <location>
        <begin position="189"/>
        <end position="211"/>
    </location>
</feature>
<feature type="zinc finger region" description="C2H2-type 6" evidence="1">
    <location>
        <begin position="217"/>
        <end position="239"/>
    </location>
</feature>
<feature type="zinc finger region" description="CCHC-type" evidence="3">
    <location>
        <begin position="245"/>
        <end position="267"/>
    </location>
</feature>
<feature type="binding site" evidence="4">
    <location>
        <position position="79"/>
    </location>
    <ligand>
        <name>Zn(2+)</name>
        <dbReference type="ChEBI" id="CHEBI:29105"/>
        <label>1</label>
    </ligand>
</feature>
<feature type="binding site" evidence="4">
    <location>
        <position position="82"/>
    </location>
    <ligand>
        <name>Zn(2+)</name>
        <dbReference type="ChEBI" id="CHEBI:29105"/>
        <label>1</label>
    </ligand>
</feature>
<feature type="binding site" evidence="4">
    <location>
        <position position="95"/>
    </location>
    <ligand>
        <name>Zn(2+)</name>
        <dbReference type="ChEBI" id="CHEBI:29105"/>
        <label>1</label>
    </ligand>
</feature>
<feature type="binding site" evidence="4">
    <location>
        <position position="99"/>
    </location>
    <ligand>
        <name>Zn(2+)</name>
        <dbReference type="ChEBI" id="CHEBI:29105"/>
        <label>1</label>
    </ligand>
</feature>
<feature type="binding site" evidence="5">
    <location>
        <position position="107"/>
    </location>
    <ligand>
        <name>Zn(2+)</name>
        <dbReference type="ChEBI" id="CHEBI:29105"/>
        <label>2</label>
    </ligand>
</feature>
<feature type="binding site" evidence="5">
    <location>
        <position position="110"/>
    </location>
    <ligand>
        <name>Zn(2+)</name>
        <dbReference type="ChEBI" id="CHEBI:29105"/>
        <label>2</label>
    </ligand>
</feature>
<feature type="binding site" evidence="5">
    <location>
        <position position="123"/>
    </location>
    <ligand>
        <name>Zn(2+)</name>
        <dbReference type="ChEBI" id="CHEBI:29105"/>
        <label>2</label>
    </ligand>
</feature>
<feature type="binding site" evidence="5">
    <location>
        <position position="127"/>
    </location>
    <ligand>
        <name>Zn(2+)</name>
        <dbReference type="ChEBI" id="CHEBI:29105"/>
        <label>2</label>
    </ligand>
</feature>
<feature type="binding site" evidence="6">
    <location>
        <position position="141"/>
    </location>
    <ligand>
        <name>Zn(2+)</name>
        <dbReference type="ChEBI" id="CHEBI:29105"/>
        <label>3</label>
    </ligand>
</feature>
<feature type="binding site" evidence="6">
    <location>
        <position position="144"/>
    </location>
    <ligand>
        <name>Zn(2+)</name>
        <dbReference type="ChEBI" id="CHEBI:29105"/>
        <label>3</label>
    </ligand>
</feature>
<feature type="binding site" evidence="6">
    <location>
        <position position="157"/>
    </location>
    <ligand>
        <name>Zn(2+)</name>
        <dbReference type="ChEBI" id="CHEBI:29105"/>
        <label>3</label>
    </ligand>
</feature>
<feature type="binding site" evidence="6">
    <location>
        <position position="161"/>
    </location>
    <ligand>
        <name>Zn(2+)</name>
        <dbReference type="ChEBI" id="CHEBI:29105"/>
        <label>3</label>
    </ligand>
</feature>
<feature type="binding site" evidence="7">
    <location>
        <position position="198"/>
    </location>
    <ligand>
        <name>Zn(2+)</name>
        <dbReference type="ChEBI" id="CHEBI:29105"/>
        <label>4</label>
    </ligand>
</feature>
<feature type="binding site" evidence="7">
    <location>
        <position position="201"/>
    </location>
    <ligand>
        <name>Zn(2+)</name>
        <dbReference type="ChEBI" id="CHEBI:29105"/>
        <label>4</label>
    </ligand>
</feature>
<feature type="binding site" evidence="7">
    <location>
        <position position="214"/>
    </location>
    <ligand>
        <name>Zn(2+)</name>
        <dbReference type="ChEBI" id="CHEBI:29105"/>
        <label>4</label>
    </ligand>
</feature>
<feature type="binding site" evidence="7">
    <location>
        <position position="218"/>
    </location>
    <ligand>
        <name>Zn(2+)</name>
        <dbReference type="ChEBI" id="CHEBI:29105"/>
        <label>4</label>
    </ligand>
</feature>
<feature type="binding site" evidence="3">
    <location>
        <position position="247"/>
    </location>
    <ligand>
        <name>Zn(2+)</name>
        <dbReference type="ChEBI" id="CHEBI:29105"/>
        <label>5</label>
    </ligand>
</feature>
<feature type="binding site" evidence="3">
    <location>
        <position position="250"/>
    </location>
    <ligand>
        <name>Zn(2+)</name>
        <dbReference type="ChEBI" id="CHEBI:29105"/>
        <label>5</label>
    </ligand>
</feature>
<feature type="binding site" evidence="3">
    <location>
        <position position="263"/>
    </location>
    <ligand>
        <name>Zn(2+)</name>
        <dbReference type="ChEBI" id="CHEBI:29105"/>
        <label>5</label>
    </ligand>
</feature>
<feature type="binding site" evidence="3">
    <location>
        <position position="267"/>
    </location>
    <ligand>
        <name>Zn(2+)</name>
        <dbReference type="ChEBI" id="CHEBI:29105"/>
        <label>5</label>
    </ligand>
</feature>
<feature type="sequence conflict" description="In Ref. 4; CAA36587." evidence="2" ref="4">
    <original>G</original>
    <variation>A</variation>
    <location>
        <position position="118"/>
    </location>
</feature>
<feature type="strand" evidence="9">
    <location>
        <begin position="80"/>
        <end position="82"/>
    </location>
</feature>
<feature type="strand" evidence="9">
    <location>
        <begin position="85"/>
        <end position="88"/>
    </location>
</feature>
<feature type="helix" evidence="9">
    <location>
        <begin position="89"/>
        <end position="95"/>
    </location>
</feature>
<feature type="helix" evidence="9">
    <location>
        <begin position="96"/>
        <end position="98"/>
    </location>
</feature>
<feature type="strand" evidence="10">
    <location>
        <begin position="104"/>
        <end position="106"/>
    </location>
</feature>
<feature type="turn" evidence="10">
    <location>
        <begin position="108"/>
        <end position="110"/>
    </location>
</feature>
<feature type="strand" evidence="10">
    <location>
        <begin position="113"/>
        <end position="116"/>
    </location>
</feature>
<feature type="helix" evidence="10">
    <location>
        <begin position="117"/>
        <end position="124"/>
    </location>
</feature>
<feature type="turn" evidence="10">
    <location>
        <begin position="125"/>
        <end position="127"/>
    </location>
</feature>
<feature type="strand" evidence="11">
    <location>
        <begin position="136"/>
        <end position="138"/>
    </location>
</feature>
<feature type="helix" evidence="11">
    <location>
        <begin position="145"/>
        <end position="153"/>
    </location>
</feature>
<feature type="turn" evidence="12">
    <location>
        <begin position="192"/>
        <end position="195"/>
    </location>
</feature>
<feature type="strand" evidence="12">
    <location>
        <begin position="198"/>
        <end position="200"/>
    </location>
</feature>
<feature type="helix" evidence="12">
    <location>
        <begin position="201"/>
        <end position="205"/>
    </location>
</feature>
<feature type="helix" evidence="12">
    <location>
        <begin position="208"/>
        <end position="210"/>
    </location>
</feature>
<feature type="strand" evidence="8">
    <location>
        <begin position="248"/>
        <end position="250"/>
    </location>
</feature>
<feature type="strand" evidence="8">
    <location>
        <begin position="253"/>
        <end position="256"/>
    </location>
</feature>
<feature type="helix" evidence="8">
    <location>
        <begin position="257"/>
        <end position="266"/>
    </location>
</feature>
<protein>
    <recommendedName>
        <fullName>Zinc finger protein 32</fullName>
    </recommendedName>
    <alternativeName>
        <fullName>C2H2-546</fullName>
    </alternativeName>
    <alternativeName>
        <fullName>Zinc finger protein KOX30</fullName>
    </alternativeName>
</protein>
<name>ZNF32_HUMAN</name>
<comment type="function">
    <text>May be involved in transcriptional regulation.</text>
</comment>
<comment type="interaction">
    <interactant intactId="EBI-1965483">
        <id>P17041</id>
    </interactant>
    <interactant intactId="EBI-3866279">
        <id>Q9BWT7</id>
        <label>CARD10</label>
    </interactant>
    <organismsDiffer>false</organismsDiffer>
    <experiments>3</experiments>
</comment>
<comment type="interaction">
    <interactant intactId="EBI-1965483">
        <id>P17041</id>
    </interactant>
    <interactant intactId="EBI-11977221">
        <id>Q86Z20</id>
        <label>CCDC125</label>
    </interactant>
    <organismsDiffer>false</organismsDiffer>
    <experiments>3</experiments>
</comment>
<comment type="interaction">
    <interactant intactId="EBI-1965483">
        <id>P17041</id>
    </interactant>
    <interactant intactId="EBI-5916454">
        <id>A6NEM1</id>
        <label>GOLGA6L9</label>
    </interactant>
    <organismsDiffer>false</organismsDiffer>
    <experiments>3</experiments>
</comment>
<comment type="interaction">
    <interactant intactId="EBI-1965483">
        <id>P17041</id>
    </interactant>
    <interactant intactId="EBI-6509505">
        <id>Q0VD86</id>
        <label>INCA1</label>
    </interactant>
    <organismsDiffer>false</organismsDiffer>
    <experiments>3</experiments>
</comment>
<comment type="interaction">
    <interactant intactId="EBI-1965483">
        <id>P17041</id>
    </interactant>
    <interactant intactId="EBI-10178153">
        <id>P60372</id>
        <label>KRTAP10-4</label>
    </interactant>
    <organismsDiffer>false</organismsDiffer>
    <experiments>3</experiments>
</comment>
<comment type="interaction">
    <interactant intactId="EBI-1965483">
        <id>P17041</id>
    </interactant>
    <interactant intactId="EBI-10172150">
        <id>P60370</id>
        <label>KRTAP10-5</label>
    </interactant>
    <organismsDiffer>false</organismsDiffer>
    <experiments>3</experiments>
</comment>
<comment type="interaction">
    <interactant intactId="EBI-1965483">
        <id>P17041</id>
    </interactant>
    <interactant intactId="EBI-10172290">
        <id>P60409</id>
        <label>KRTAP10-7</label>
    </interactant>
    <organismsDiffer>false</organismsDiffer>
    <experiments>3</experiments>
</comment>
<comment type="interaction">
    <interactant intactId="EBI-1965483">
        <id>P17041</id>
    </interactant>
    <interactant intactId="EBI-10171774">
        <id>P60410</id>
        <label>KRTAP10-8</label>
    </interactant>
    <organismsDiffer>false</organismsDiffer>
    <experiments>3</experiments>
</comment>
<comment type="interaction">
    <interactant intactId="EBI-1965483">
        <id>P17041</id>
    </interactant>
    <interactant intactId="EBI-945833">
        <id>Q7Z3S9</id>
        <label>NOTCH2NLA</label>
    </interactant>
    <organismsDiffer>false</organismsDiffer>
    <experiments>3</experiments>
</comment>
<comment type="interaction">
    <interactant intactId="EBI-1965483">
        <id>P17041</id>
    </interactant>
    <interactant intactId="EBI-10269209">
        <id>Q8NC24</id>
        <label>RELL2</label>
    </interactant>
    <organismsDiffer>false</organismsDiffer>
    <experiments>2</experiments>
</comment>
<comment type="subcellular location">
    <subcellularLocation>
        <location evidence="2">Nucleus</location>
    </subcellularLocation>
</comment>
<comment type="similarity">
    <text evidence="2">Belongs to the krueppel C2H2-type zinc-finger protein family.</text>
</comment>